<feature type="chain" id="PRO_0000206565" description="Dynamin-1">
    <location>
        <begin position="1"/>
        <end position="864"/>
    </location>
</feature>
<feature type="domain" description="Dynamin-type G" evidence="6">
    <location>
        <begin position="28"/>
        <end position="294"/>
    </location>
</feature>
<feature type="domain" description="PH" evidence="4">
    <location>
        <begin position="519"/>
        <end position="625"/>
    </location>
</feature>
<feature type="domain" description="GED" evidence="5">
    <location>
        <begin position="659"/>
        <end position="750"/>
    </location>
</feature>
<feature type="region of interest" description="G1 motif" evidence="6">
    <location>
        <begin position="38"/>
        <end position="45"/>
    </location>
</feature>
<feature type="region of interest" description="G2 motif" evidence="6">
    <location>
        <begin position="64"/>
        <end position="66"/>
    </location>
</feature>
<feature type="region of interest" description="G3 motif" evidence="6">
    <location>
        <begin position="136"/>
        <end position="139"/>
    </location>
</feature>
<feature type="region of interest" description="G4 motif" evidence="6">
    <location>
        <begin position="205"/>
        <end position="208"/>
    </location>
</feature>
<feature type="region of interest" description="G5 motif" evidence="6">
    <location>
        <begin position="235"/>
        <end position="238"/>
    </location>
</feature>
<feature type="region of interest" description="Disordered" evidence="7">
    <location>
        <begin position="767"/>
        <end position="864"/>
    </location>
</feature>
<feature type="compositionally biased region" description="Pro residues" evidence="7">
    <location>
        <begin position="825"/>
        <end position="843"/>
    </location>
</feature>
<feature type="binding site" evidence="2">
    <location>
        <position position="41"/>
    </location>
    <ligand>
        <name>GDP</name>
        <dbReference type="ChEBI" id="CHEBI:58189"/>
    </ligand>
</feature>
<feature type="binding site" evidence="2">
    <location>
        <position position="43"/>
    </location>
    <ligand>
        <name>GDP</name>
        <dbReference type="ChEBI" id="CHEBI:58189"/>
    </ligand>
</feature>
<feature type="binding site" evidence="2">
    <location>
        <position position="44"/>
    </location>
    <ligand>
        <name>GDP</name>
        <dbReference type="ChEBI" id="CHEBI:58189"/>
    </ligand>
</feature>
<feature type="binding site" evidence="2">
    <location>
        <position position="45"/>
    </location>
    <ligand>
        <name>GDP</name>
        <dbReference type="ChEBI" id="CHEBI:58189"/>
    </ligand>
</feature>
<feature type="binding site" evidence="2">
    <location>
        <position position="46"/>
    </location>
    <ligand>
        <name>GDP</name>
        <dbReference type="ChEBI" id="CHEBI:58189"/>
    </ligand>
</feature>
<feature type="binding site" evidence="2">
    <location>
        <position position="59"/>
    </location>
    <ligand>
        <name>GDP</name>
        <dbReference type="ChEBI" id="CHEBI:58189"/>
    </ligand>
</feature>
<feature type="binding site" evidence="2">
    <location>
        <position position="60"/>
    </location>
    <ligand>
        <name>GDP</name>
        <dbReference type="ChEBI" id="CHEBI:58189"/>
    </ligand>
</feature>
<feature type="binding site" evidence="2">
    <location>
        <position position="206"/>
    </location>
    <ligand>
        <name>GDP</name>
        <dbReference type="ChEBI" id="CHEBI:58189"/>
    </ligand>
</feature>
<feature type="binding site" evidence="2">
    <location>
        <position position="208"/>
    </location>
    <ligand>
        <name>GDP</name>
        <dbReference type="ChEBI" id="CHEBI:58189"/>
    </ligand>
</feature>
<feature type="binding site" evidence="2">
    <location>
        <position position="211"/>
    </location>
    <ligand>
        <name>GDP</name>
        <dbReference type="ChEBI" id="CHEBI:58189"/>
    </ligand>
</feature>
<feature type="binding site" evidence="2">
    <location>
        <position position="236"/>
    </location>
    <ligand>
        <name>GDP</name>
        <dbReference type="ChEBI" id="CHEBI:58189"/>
    </ligand>
</feature>
<feature type="binding site" evidence="2">
    <location>
        <position position="237"/>
    </location>
    <ligand>
        <name>GDP</name>
        <dbReference type="ChEBI" id="CHEBI:58189"/>
    </ligand>
</feature>
<feature type="binding site" evidence="2">
    <location>
        <position position="239"/>
    </location>
    <ligand>
        <name>GDP</name>
        <dbReference type="ChEBI" id="CHEBI:58189"/>
    </ligand>
</feature>
<feature type="modified residue" description="Phosphotyrosine" evidence="1">
    <location>
        <position position="80"/>
    </location>
</feature>
<feature type="modified residue" description="3'-nitrotyrosine; alternate" evidence="1">
    <location>
        <position position="125"/>
    </location>
</feature>
<feature type="modified residue" description="Phosphotyrosine; alternate" evidence="1">
    <location>
        <position position="125"/>
    </location>
</feature>
<feature type="modified residue" description="Phosphoserine" evidence="1">
    <location>
        <position position="306"/>
    </location>
</feature>
<feature type="modified residue" description="Phosphoserine" evidence="12 26">
    <location>
        <position position="347"/>
    </location>
</feature>
<feature type="modified residue" description="Phosphotyrosine" evidence="1">
    <location>
        <position position="354"/>
    </location>
</feature>
<feature type="modified residue" description="Phosphoserine" evidence="12">
    <location>
        <position position="512"/>
    </location>
</feature>
<feature type="modified residue" description="Phosphoserine; by CDK5" evidence="8 12">
    <location>
        <position position="774"/>
    </location>
</feature>
<feature type="modified residue" description="Phosphoserine" evidence="8 12">
    <location>
        <position position="778"/>
    </location>
</feature>
<feature type="modified residue" description="Omega-N-methylarginine" evidence="1">
    <location>
        <position position="796"/>
    </location>
</feature>
<feature type="modified residue" description="Phosphoserine" evidence="12">
    <location>
        <position position="822"/>
    </location>
</feature>
<feature type="modified residue" description="Phosphoserine" evidence="12 26">
    <location>
        <position position="851"/>
    </location>
</feature>
<feature type="modified residue" description="Phosphoserine" evidence="12 26">
    <location>
        <position position="857"/>
    </location>
</feature>
<feature type="splice variant" id="VSP_034033" description="In isoform 5, isoform 6, isoform 7 and isoform 8." evidence="21">
    <original>LAFEATVKKQVQKLKEPSIKCVDMVVSELTSTIRKCSE</original>
    <variation>MAFETIVKKQVKKIREPCLKCVDMVISELISTVRQCTK</variation>
    <location>
        <begin position="407"/>
        <end position="444"/>
    </location>
</feature>
<feature type="splice variant" id="VSP_034034" description="In isoform 3 and isoform 7." evidence="21">
    <original>QSVPAGRRSPTSSPTPQRRAPAVPPARPGSRGPAPGPPPAGSALGGAPP</original>
    <variation>AHVQPHAAAPSPRRAPSPARVAGPCSWASACWIRPGGGSPRALQAGGFP</variation>
    <location>
        <begin position="766"/>
        <end position="814"/>
    </location>
</feature>
<feature type="splice variant" id="VSP_034035" description="In isoform 3 and isoform 7." evidence="21">
    <location>
        <begin position="815"/>
        <end position="864"/>
    </location>
</feature>
<feature type="splice variant" id="VSP_034037" description="In isoform 2 and isoform 6." evidence="19">
    <original>SRSGQASPSRPESPRPPFDL</original>
    <variation>RITISDP</variation>
    <location>
        <begin position="845"/>
        <end position="864"/>
    </location>
</feature>
<feature type="splice variant" id="VSP_034036" description="In isoform 4 and isoform 8." evidence="21">
    <original>SRSGQASPSRPESPRPPFDL</original>
    <variation>SQPIGSGKSVPS</variation>
    <location>
        <begin position="845"/>
        <end position="864"/>
    </location>
</feature>
<feature type="mutagenesis site" description="Decreases of 32% the basal GTPase activity. Decreases of 44% the assembly-stimulated GTPase activity." evidence="11">
    <original>R</original>
    <variation>A</variation>
    <location>
        <position position="59"/>
    </location>
</feature>
<feature type="mutagenesis site" description="Decreases of 67% the basal GTPase activity. Decreases of 80% the assembly-stimulated GTPase activity." evidence="11">
    <original>R</original>
    <variation>K</variation>
    <location>
        <position position="59"/>
    </location>
</feature>
<feature type="mutagenesis site" description="Does not affect phosphorylation by CDK5. Significantly reduces phosphorylation by CDK5; when associated with A-778 and A-780." evidence="12">
    <original>S</original>
    <variation>A</variation>
    <location>
        <position position="774"/>
    </location>
</feature>
<feature type="mutagenesis site" description="Does not affect phosphorylation by CDK5. Significantly reduces phosphorylation by CDK5; when associated with A-774 and A-780." evidence="12">
    <original>S</original>
    <variation>A</variation>
    <location>
        <position position="778"/>
    </location>
</feature>
<feature type="mutagenesis site" description="Does not affect phosphorylation by CDK5. Significantly reduces phosphorylation by CDK5; when associated with A-774 and A-778." evidence="12">
    <original>T</original>
    <variation>A</variation>
    <location>
        <position position="780"/>
    </location>
</feature>
<feature type="helix" evidence="28">
    <location>
        <begin position="6"/>
        <end position="8"/>
    </location>
</feature>
<feature type="helix" evidence="27">
    <location>
        <begin position="9"/>
        <end position="20"/>
    </location>
</feature>
<feature type="turn" evidence="28">
    <location>
        <begin position="22"/>
        <end position="24"/>
    </location>
</feature>
<feature type="helix" evidence="28">
    <location>
        <begin position="27"/>
        <end position="29"/>
    </location>
</feature>
<feature type="strand" evidence="27">
    <location>
        <begin position="33"/>
        <end position="39"/>
    </location>
</feature>
<feature type="turn" evidence="28">
    <location>
        <begin position="40"/>
        <end position="42"/>
    </location>
</feature>
<feature type="helix" evidence="27">
    <location>
        <begin position="44"/>
        <end position="52"/>
    </location>
</feature>
<feature type="strand" evidence="28">
    <location>
        <begin position="60"/>
        <end position="62"/>
    </location>
</feature>
<feature type="strand" evidence="27">
    <location>
        <begin position="69"/>
        <end position="75"/>
    </location>
</feature>
<feature type="strand" evidence="27">
    <location>
        <begin position="80"/>
        <end position="83"/>
    </location>
</feature>
<feature type="turn" evidence="28">
    <location>
        <begin position="85"/>
        <end position="88"/>
    </location>
</feature>
<feature type="helix" evidence="27">
    <location>
        <begin position="94"/>
        <end position="108"/>
    </location>
</feature>
<feature type="strand" evidence="27">
    <location>
        <begin position="120"/>
        <end position="126"/>
    </location>
</feature>
<feature type="strand" evidence="27">
    <location>
        <begin position="131"/>
        <end position="136"/>
    </location>
</feature>
<feature type="strand" evidence="27">
    <location>
        <begin position="146"/>
        <end position="148"/>
    </location>
</feature>
<feature type="helix" evidence="27">
    <location>
        <begin position="152"/>
        <end position="164"/>
    </location>
</feature>
<feature type="strand" evidence="27">
    <location>
        <begin position="169"/>
        <end position="179"/>
    </location>
</feature>
<feature type="helix" evidence="27">
    <location>
        <begin position="181"/>
        <end position="183"/>
    </location>
</feature>
<feature type="helix" evidence="27">
    <location>
        <begin position="185"/>
        <end position="193"/>
    </location>
</feature>
<feature type="strand" evidence="27">
    <location>
        <begin position="198"/>
        <end position="205"/>
    </location>
</feature>
<feature type="helix" evidence="27">
    <location>
        <begin position="207"/>
        <end position="209"/>
    </location>
</feature>
<feature type="helix" evidence="27">
    <location>
        <begin position="217"/>
        <end position="220"/>
    </location>
</feature>
<feature type="strand" evidence="27">
    <location>
        <begin position="231"/>
        <end position="233"/>
    </location>
</feature>
<feature type="strand" evidence="28">
    <location>
        <begin position="240"/>
        <end position="247"/>
    </location>
</feature>
<feature type="helix" evidence="27">
    <location>
        <begin position="248"/>
        <end position="261"/>
    </location>
</feature>
<feature type="turn" evidence="27">
    <location>
        <begin position="263"/>
        <end position="265"/>
    </location>
</feature>
<feature type="helix" evidence="27">
    <location>
        <begin position="266"/>
        <end position="271"/>
    </location>
</feature>
<feature type="helix" evidence="27">
    <location>
        <begin position="274"/>
        <end position="303"/>
    </location>
</feature>
<feature type="strand" evidence="28">
    <location>
        <begin position="321"/>
        <end position="323"/>
    </location>
</feature>
<feature type="helix" evidence="28">
    <location>
        <begin position="326"/>
        <end position="344"/>
    </location>
</feature>
<feature type="helix" evidence="28">
    <location>
        <begin position="358"/>
        <end position="367"/>
    </location>
</feature>
<feature type="helix" evidence="28">
    <location>
        <begin position="369"/>
        <end position="375"/>
    </location>
</feature>
<feature type="helix" evidence="28">
    <location>
        <begin position="381"/>
        <end position="394"/>
    </location>
</feature>
<feature type="helix" evidence="28">
    <location>
        <begin position="404"/>
        <end position="418"/>
    </location>
</feature>
<feature type="helix" evidence="28">
    <location>
        <begin position="421"/>
        <end position="442"/>
    </location>
</feature>
<feature type="helix" evidence="28">
    <location>
        <begin position="443"/>
        <end position="446"/>
    </location>
</feature>
<feature type="helix" evidence="28">
    <location>
        <begin position="450"/>
        <end position="483"/>
    </location>
</feature>
<feature type="strand" evidence="28">
    <location>
        <begin position="520"/>
        <end position="531"/>
    </location>
</feature>
<feature type="strand" evidence="28">
    <location>
        <begin position="540"/>
        <end position="555"/>
    </location>
</feature>
<feature type="strand" evidence="28">
    <location>
        <begin position="561"/>
        <end position="566"/>
    </location>
</feature>
<feature type="strand" evidence="28">
    <location>
        <begin position="570"/>
        <end position="575"/>
    </location>
</feature>
<feature type="strand" evidence="28">
    <location>
        <begin position="584"/>
        <end position="590"/>
    </location>
</feature>
<feature type="strand" evidence="28">
    <location>
        <begin position="600"/>
        <end position="609"/>
    </location>
</feature>
<feature type="helix" evidence="28">
    <location>
        <begin position="610"/>
        <end position="622"/>
    </location>
</feature>
<feature type="helix" evidence="28">
    <location>
        <begin position="654"/>
        <end position="688"/>
    </location>
</feature>
<feature type="helix" evidence="28">
    <location>
        <begin position="690"/>
        <end position="699"/>
    </location>
</feature>
<feature type="helix" evidence="28">
    <location>
        <begin position="701"/>
        <end position="707"/>
    </location>
</feature>
<feature type="turn" evidence="28">
    <location>
        <begin position="711"/>
        <end position="715"/>
    </location>
</feature>
<feature type="helix" evidence="28">
    <location>
        <begin position="719"/>
        <end position="742"/>
    </location>
</feature>
<dbReference type="EC" id="3.6.5.5" evidence="11"/>
<dbReference type="EMBL" id="X54531">
    <property type="protein sequence ID" value="CAA38397.1"/>
    <property type="molecule type" value="mRNA"/>
</dbReference>
<dbReference type="EMBL" id="CO398357">
    <property type="status" value="NOT_ANNOTATED_CDS"/>
    <property type="molecule type" value="mRNA"/>
</dbReference>
<dbReference type="EMBL" id="CB583951">
    <property type="status" value="NOT_ANNOTATED_CDS"/>
    <property type="molecule type" value="mRNA"/>
</dbReference>
<dbReference type="EMBL" id="CB708564">
    <property type="status" value="NOT_ANNOTATED_CDS"/>
    <property type="molecule type" value="mRNA"/>
</dbReference>
<dbReference type="PIR" id="S11508">
    <property type="entry name" value="S11508"/>
</dbReference>
<dbReference type="RefSeq" id="NP_542420.1">
    <molecule id="P21575-2"/>
    <property type="nucleotide sequence ID" value="NM_080689.5"/>
</dbReference>
<dbReference type="RefSeq" id="XP_038960072.1">
    <molecule id="P21575-1"/>
    <property type="nucleotide sequence ID" value="XM_039104144.2"/>
</dbReference>
<dbReference type="RefSeq" id="XP_038960073.1">
    <molecule id="P21575-5"/>
    <property type="nucleotide sequence ID" value="XM_039104145.2"/>
</dbReference>
<dbReference type="RefSeq" id="XP_038960079.1">
    <molecule id="P21575-2"/>
    <property type="nucleotide sequence ID" value="XM_039104151.2"/>
</dbReference>
<dbReference type="RefSeq" id="XP_063139090.1">
    <molecule id="P21575-6"/>
    <property type="nucleotide sequence ID" value="XM_063283020.1"/>
</dbReference>
<dbReference type="RefSeq" id="XP_063139092.1">
    <molecule id="P21575-3"/>
    <property type="nucleotide sequence ID" value="XM_063283022.1"/>
</dbReference>
<dbReference type="PDB" id="2AKA">
    <property type="method" value="X-ray"/>
    <property type="resolution" value="1.90 A"/>
    <property type="chains" value="B=6-304"/>
</dbReference>
<dbReference type="PDB" id="3ZVR">
    <property type="method" value="X-ray"/>
    <property type="resolution" value="3.10 A"/>
    <property type="chains" value="A=1-752"/>
</dbReference>
<dbReference type="PDBsum" id="2AKA"/>
<dbReference type="PDBsum" id="3ZVR"/>
<dbReference type="BMRB" id="P21575"/>
<dbReference type="SMR" id="P21575"/>
<dbReference type="BioGRID" id="250837">
    <property type="interactions" value="31"/>
</dbReference>
<dbReference type="CORUM" id="P21575"/>
<dbReference type="DIP" id="DIP-30978N"/>
<dbReference type="FunCoup" id="P21575">
    <property type="interactions" value="2274"/>
</dbReference>
<dbReference type="IntAct" id="P21575">
    <property type="interactions" value="22"/>
</dbReference>
<dbReference type="MINT" id="P21575"/>
<dbReference type="STRING" id="10116.ENSRNOP00000041582"/>
<dbReference type="BindingDB" id="P21575"/>
<dbReference type="ChEMBL" id="CHEMBL1075191"/>
<dbReference type="GlyGen" id="P21575">
    <property type="glycosylation" value="2 sites, 1 O-linked glycan (1 site)"/>
</dbReference>
<dbReference type="iPTMnet" id="P21575"/>
<dbReference type="PhosphoSitePlus" id="P21575"/>
<dbReference type="jPOST" id="P21575"/>
<dbReference type="PaxDb" id="10116-ENSRNOP00000047444"/>
<dbReference type="Ensembl" id="ENSRNOT00000064039.5">
    <molecule id="P21575-2"/>
    <property type="protein sequence ID" value="ENSRNOP00000060845.3"/>
    <property type="gene ID" value="ENSRNOG00000033835.7"/>
</dbReference>
<dbReference type="Ensembl" id="ENSRNOT00000102787.1">
    <molecule id="P21575-6"/>
    <property type="protein sequence ID" value="ENSRNOP00000091634.1"/>
    <property type="gene ID" value="ENSRNOG00000033835.7"/>
</dbReference>
<dbReference type="GeneID" id="140694"/>
<dbReference type="KEGG" id="rno:140694"/>
<dbReference type="UCSC" id="RGD:71096">
    <molecule id="P21575-1"/>
    <property type="organism name" value="rat"/>
</dbReference>
<dbReference type="AGR" id="RGD:71096"/>
<dbReference type="CTD" id="1759"/>
<dbReference type="RGD" id="71096">
    <property type="gene designation" value="Dnm1"/>
</dbReference>
<dbReference type="VEuPathDB" id="HostDB:ENSRNOG00000033835"/>
<dbReference type="eggNOG" id="KOG0446">
    <property type="taxonomic scope" value="Eukaryota"/>
</dbReference>
<dbReference type="GeneTree" id="ENSGT00940000155214"/>
<dbReference type="HOGENOM" id="CLU_008964_1_0_1"/>
<dbReference type="InParanoid" id="P21575"/>
<dbReference type="PhylomeDB" id="P21575"/>
<dbReference type="BRENDA" id="3.6.5.5">
    <property type="organism ID" value="5301"/>
</dbReference>
<dbReference type="Reactome" id="R-RNO-166016">
    <property type="pathway name" value="Toll Like Receptor 4 (TLR4) Cascade"/>
</dbReference>
<dbReference type="Reactome" id="R-RNO-190873">
    <property type="pathway name" value="Gap junction degradation"/>
</dbReference>
<dbReference type="Reactome" id="R-RNO-196025">
    <property type="pathway name" value="Formation of annular gap junctions"/>
</dbReference>
<dbReference type="Reactome" id="R-RNO-2132295">
    <property type="pathway name" value="MHC class II antigen presentation"/>
</dbReference>
<dbReference type="Reactome" id="R-RNO-437239">
    <property type="pathway name" value="Recycling pathway of L1"/>
</dbReference>
<dbReference type="Reactome" id="R-RNO-8856828">
    <property type="pathway name" value="Clathrin-mediated endocytosis"/>
</dbReference>
<dbReference type="EvolutionaryTrace" id="P21575"/>
<dbReference type="PRO" id="PR:P21575"/>
<dbReference type="Proteomes" id="UP000002494">
    <property type="component" value="Chromosome 3"/>
</dbReference>
<dbReference type="Bgee" id="ENSRNOG00000033835">
    <property type="expression patterns" value="Expressed in Ammon's horn and 20 other cell types or tissues"/>
</dbReference>
<dbReference type="GO" id="GO:0042583">
    <property type="term" value="C:chromaffin granule"/>
    <property type="evidence" value="ECO:0007669"/>
    <property type="project" value="UniProtKB-SubCell"/>
</dbReference>
<dbReference type="GO" id="GO:0005905">
    <property type="term" value="C:clathrin-coated pit"/>
    <property type="evidence" value="ECO:0000250"/>
    <property type="project" value="UniProtKB"/>
</dbReference>
<dbReference type="GO" id="GO:0030136">
    <property type="term" value="C:clathrin-coated vesicle"/>
    <property type="evidence" value="ECO:0000314"/>
    <property type="project" value="UniProtKB"/>
</dbReference>
<dbReference type="GO" id="GO:0005737">
    <property type="term" value="C:cytoplasm"/>
    <property type="evidence" value="ECO:0000318"/>
    <property type="project" value="GO_Central"/>
</dbReference>
<dbReference type="GO" id="GO:0030139">
    <property type="term" value="C:endocytic vesicle"/>
    <property type="evidence" value="ECO:0000314"/>
    <property type="project" value="UniProtKB"/>
</dbReference>
<dbReference type="GO" id="GO:0098978">
    <property type="term" value="C:glutamatergic synapse"/>
    <property type="evidence" value="ECO:0000266"/>
    <property type="project" value="RGD"/>
</dbReference>
<dbReference type="GO" id="GO:0005794">
    <property type="term" value="C:Golgi apparatus"/>
    <property type="evidence" value="ECO:0000314"/>
    <property type="project" value="UniProtKB"/>
</dbReference>
<dbReference type="GO" id="GO:0030117">
    <property type="term" value="C:membrane coat"/>
    <property type="evidence" value="ECO:0000266"/>
    <property type="project" value="RGD"/>
</dbReference>
<dbReference type="GO" id="GO:0005874">
    <property type="term" value="C:microtubule"/>
    <property type="evidence" value="ECO:0000318"/>
    <property type="project" value="GO_Central"/>
</dbReference>
<dbReference type="GO" id="GO:0001917">
    <property type="term" value="C:photoreceptor inner segment"/>
    <property type="evidence" value="ECO:0000266"/>
    <property type="project" value="RGD"/>
</dbReference>
<dbReference type="GO" id="GO:0098684">
    <property type="term" value="C:photoreceptor ribbon synapse"/>
    <property type="evidence" value="ECO:0000266"/>
    <property type="project" value="RGD"/>
</dbReference>
<dbReference type="GO" id="GO:0005886">
    <property type="term" value="C:plasma membrane"/>
    <property type="evidence" value="ECO:0000318"/>
    <property type="project" value="GO_Central"/>
</dbReference>
<dbReference type="GO" id="GO:0098793">
    <property type="term" value="C:presynapse"/>
    <property type="evidence" value="ECO:0000314"/>
    <property type="project" value="UniProtKB"/>
</dbReference>
<dbReference type="GO" id="GO:0098835">
    <property type="term" value="C:presynaptic endocytic zone membrane"/>
    <property type="evidence" value="ECO:0000314"/>
    <property type="project" value="SynGO"/>
</dbReference>
<dbReference type="GO" id="GO:0032991">
    <property type="term" value="C:protein-containing complex"/>
    <property type="evidence" value="ECO:0000314"/>
    <property type="project" value="RGD"/>
</dbReference>
<dbReference type="GO" id="GO:0045202">
    <property type="term" value="C:synapse"/>
    <property type="evidence" value="ECO:0000318"/>
    <property type="project" value="GO_Central"/>
</dbReference>
<dbReference type="GO" id="GO:0008021">
    <property type="term" value="C:synaptic vesicle"/>
    <property type="evidence" value="ECO:0000314"/>
    <property type="project" value="RGD"/>
</dbReference>
<dbReference type="GO" id="GO:0043196">
    <property type="term" value="C:varicosity"/>
    <property type="evidence" value="ECO:0000314"/>
    <property type="project" value="RGD"/>
</dbReference>
<dbReference type="GO" id="GO:0031749">
    <property type="term" value="F:D2 dopamine receptor binding"/>
    <property type="evidence" value="ECO:0000353"/>
    <property type="project" value="RGD"/>
</dbReference>
<dbReference type="GO" id="GO:0019003">
    <property type="term" value="F:GDP binding"/>
    <property type="evidence" value="ECO:0000250"/>
    <property type="project" value="UniProtKB"/>
</dbReference>
<dbReference type="GO" id="GO:0005525">
    <property type="term" value="F:GTP binding"/>
    <property type="evidence" value="ECO:0007669"/>
    <property type="project" value="UniProtKB-KW"/>
</dbReference>
<dbReference type="GO" id="GO:0003924">
    <property type="term" value="F:GTPase activity"/>
    <property type="evidence" value="ECO:0000250"/>
    <property type="project" value="UniProtKB"/>
</dbReference>
<dbReference type="GO" id="GO:0042802">
    <property type="term" value="F:identical protein binding"/>
    <property type="evidence" value="ECO:0000353"/>
    <property type="project" value="IntAct"/>
</dbReference>
<dbReference type="GO" id="GO:0008017">
    <property type="term" value="F:microtubule binding"/>
    <property type="evidence" value="ECO:0000318"/>
    <property type="project" value="GO_Central"/>
</dbReference>
<dbReference type="GO" id="GO:0050998">
    <property type="term" value="F:nitric-oxide synthase binding"/>
    <property type="evidence" value="ECO:0000353"/>
    <property type="project" value="RGD"/>
</dbReference>
<dbReference type="GO" id="GO:0005547">
    <property type="term" value="F:phosphatidylinositol-3,4,5-trisphosphate binding"/>
    <property type="evidence" value="ECO:0000266"/>
    <property type="project" value="RGD"/>
</dbReference>
<dbReference type="GO" id="GO:0005546">
    <property type="term" value="F:phosphatidylinositol-4,5-bisphosphate binding"/>
    <property type="evidence" value="ECO:0000250"/>
    <property type="project" value="UniProtKB"/>
</dbReference>
<dbReference type="GO" id="GO:0042803">
    <property type="term" value="F:protein homodimerization activity"/>
    <property type="evidence" value="ECO:0000250"/>
    <property type="project" value="UniProtKB"/>
</dbReference>
<dbReference type="GO" id="GO:0019901">
    <property type="term" value="F:protein kinase binding"/>
    <property type="evidence" value="ECO:0000266"/>
    <property type="project" value="RGD"/>
</dbReference>
<dbReference type="GO" id="GO:0120283">
    <property type="term" value="F:protein serine/threonine kinase binding"/>
    <property type="evidence" value="ECO:0000353"/>
    <property type="project" value="RGD"/>
</dbReference>
<dbReference type="GO" id="GO:0044877">
    <property type="term" value="F:protein-containing complex binding"/>
    <property type="evidence" value="ECO:0000314"/>
    <property type="project" value="RGD"/>
</dbReference>
<dbReference type="GO" id="GO:0017124">
    <property type="term" value="F:SH3 domain binding"/>
    <property type="evidence" value="ECO:0000314"/>
    <property type="project" value="RGD"/>
</dbReference>
<dbReference type="GO" id="GO:0099049">
    <property type="term" value="P:clathrin coat assembly involved in endocytosis"/>
    <property type="evidence" value="ECO:0000250"/>
    <property type="project" value="UniProtKB"/>
</dbReference>
<dbReference type="GO" id="GO:0006897">
    <property type="term" value="P:endocytosis"/>
    <property type="evidence" value="ECO:0000266"/>
    <property type="project" value="RGD"/>
</dbReference>
<dbReference type="GO" id="GO:0007032">
    <property type="term" value="P:endosome organization"/>
    <property type="evidence" value="ECO:0000266"/>
    <property type="project" value="RGD"/>
</dbReference>
<dbReference type="GO" id="GO:0002031">
    <property type="term" value="P:G protein-coupled receptor internalization"/>
    <property type="evidence" value="ECO:0000315"/>
    <property type="project" value="RGD"/>
</dbReference>
<dbReference type="GO" id="GO:0050804">
    <property type="term" value="P:modulation of chemical synaptic transmission"/>
    <property type="evidence" value="ECO:0000266"/>
    <property type="project" value="RGD"/>
</dbReference>
<dbReference type="GO" id="GO:1900244">
    <property type="term" value="P:positive regulation of synaptic vesicle endocytosis"/>
    <property type="evidence" value="ECO:0000315"/>
    <property type="project" value="RGD"/>
</dbReference>
<dbReference type="GO" id="GO:1903423">
    <property type="term" value="P:positive regulation of synaptic vesicle recycling"/>
    <property type="evidence" value="ECO:0000315"/>
    <property type="project" value="RGD"/>
</dbReference>
<dbReference type="GO" id="GO:0051260">
    <property type="term" value="P:protein homooligomerization"/>
    <property type="evidence" value="ECO:0000266"/>
    <property type="project" value="RGD"/>
</dbReference>
<dbReference type="GO" id="GO:0051289">
    <property type="term" value="P:protein homotetramerization"/>
    <property type="evidence" value="ECO:0000250"/>
    <property type="project" value="UniProtKB"/>
</dbReference>
<dbReference type="GO" id="GO:0031623">
    <property type="term" value="P:receptor internalization"/>
    <property type="evidence" value="ECO:0000315"/>
    <property type="project" value="UniProtKB"/>
</dbReference>
<dbReference type="GO" id="GO:0006898">
    <property type="term" value="P:receptor-mediated endocytosis"/>
    <property type="evidence" value="ECO:0000315"/>
    <property type="project" value="RGD"/>
</dbReference>
<dbReference type="GO" id="GO:1900242">
    <property type="term" value="P:regulation of synaptic vesicle endocytosis"/>
    <property type="evidence" value="ECO:0000315"/>
    <property type="project" value="RGD"/>
</dbReference>
<dbReference type="GO" id="GO:0097494">
    <property type="term" value="P:regulation of vesicle size"/>
    <property type="evidence" value="ECO:0000250"/>
    <property type="project" value="UniProtKB"/>
</dbReference>
<dbReference type="GO" id="GO:1904645">
    <property type="term" value="P:response to amyloid-beta"/>
    <property type="evidence" value="ECO:0000270"/>
    <property type="project" value="RGD"/>
</dbReference>
<dbReference type="GO" id="GO:0016185">
    <property type="term" value="P:synaptic vesicle budding from presynaptic endocytic zone membrane"/>
    <property type="evidence" value="ECO:0000318"/>
    <property type="project" value="GO_Central"/>
</dbReference>
<dbReference type="GO" id="GO:0048488">
    <property type="term" value="P:synaptic vesicle endocytosis"/>
    <property type="evidence" value="ECO:0000266"/>
    <property type="project" value="RGD"/>
</dbReference>
<dbReference type="GO" id="GO:0099050">
    <property type="term" value="P:vesicle scission"/>
    <property type="evidence" value="ECO:0000250"/>
    <property type="project" value="UniProtKB"/>
</dbReference>
<dbReference type="CDD" id="cd08771">
    <property type="entry name" value="DLP_1"/>
    <property type="match status" value="1"/>
</dbReference>
<dbReference type="CDD" id="cd01256">
    <property type="entry name" value="PH_dynamin"/>
    <property type="match status" value="1"/>
</dbReference>
<dbReference type="DisProt" id="DP02617"/>
<dbReference type="FunFam" id="1.20.120.1240:FF:000019">
    <property type="entry name" value="Dynamin 2"/>
    <property type="match status" value="1"/>
</dbReference>
<dbReference type="FunFam" id="1.20.120.1240:FF:000014">
    <property type="entry name" value="Dynamin 2b"/>
    <property type="match status" value="1"/>
</dbReference>
<dbReference type="FunFam" id="3.40.50.300:FF:000045">
    <property type="entry name" value="dynamin-1 isoform X2"/>
    <property type="match status" value="1"/>
</dbReference>
<dbReference type="FunFam" id="2.30.29.30:FF:000555">
    <property type="entry name" value="dynamin-1-like isoform X1"/>
    <property type="match status" value="1"/>
</dbReference>
<dbReference type="Gene3D" id="1.20.120.1240">
    <property type="entry name" value="Dynamin, middle domain"/>
    <property type="match status" value="1"/>
</dbReference>
<dbReference type="Gene3D" id="3.40.50.300">
    <property type="entry name" value="P-loop containing nucleotide triphosphate hydrolases"/>
    <property type="match status" value="1"/>
</dbReference>
<dbReference type="Gene3D" id="2.30.29.30">
    <property type="entry name" value="Pleckstrin-homology domain (PH domain)/Phosphotyrosine-binding domain (PTB)"/>
    <property type="match status" value="1"/>
</dbReference>
<dbReference type="InterPro" id="IPR022812">
    <property type="entry name" value="Dynamin"/>
</dbReference>
<dbReference type="InterPro" id="IPR001401">
    <property type="entry name" value="Dynamin_GTPase"/>
</dbReference>
<dbReference type="InterPro" id="IPR019762">
    <property type="entry name" value="Dynamin_GTPase_CS"/>
</dbReference>
<dbReference type="InterPro" id="IPR045063">
    <property type="entry name" value="Dynamin_N"/>
</dbReference>
<dbReference type="InterPro" id="IPR000375">
    <property type="entry name" value="Dynamin_stalk"/>
</dbReference>
<dbReference type="InterPro" id="IPR030381">
    <property type="entry name" value="G_DYNAMIN_dom"/>
</dbReference>
<dbReference type="InterPro" id="IPR003130">
    <property type="entry name" value="GED"/>
</dbReference>
<dbReference type="InterPro" id="IPR020850">
    <property type="entry name" value="GED_dom"/>
</dbReference>
<dbReference type="InterPro" id="IPR027417">
    <property type="entry name" value="P-loop_NTPase"/>
</dbReference>
<dbReference type="InterPro" id="IPR011993">
    <property type="entry name" value="PH-like_dom_sf"/>
</dbReference>
<dbReference type="InterPro" id="IPR001849">
    <property type="entry name" value="PH_domain"/>
</dbReference>
<dbReference type="PANTHER" id="PTHR11566">
    <property type="entry name" value="DYNAMIN"/>
    <property type="match status" value="1"/>
</dbReference>
<dbReference type="PANTHER" id="PTHR11566:SF32">
    <property type="entry name" value="DYNAMIN-1"/>
    <property type="match status" value="1"/>
</dbReference>
<dbReference type="Pfam" id="PF01031">
    <property type="entry name" value="Dynamin_M"/>
    <property type="match status" value="1"/>
</dbReference>
<dbReference type="Pfam" id="PF00350">
    <property type="entry name" value="Dynamin_N"/>
    <property type="match status" value="1"/>
</dbReference>
<dbReference type="Pfam" id="PF02212">
    <property type="entry name" value="GED"/>
    <property type="match status" value="1"/>
</dbReference>
<dbReference type="Pfam" id="PF00169">
    <property type="entry name" value="PH"/>
    <property type="match status" value="1"/>
</dbReference>
<dbReference type="PRINTS" id="PR00195">
    <property type="entry name" value="DYNAMIN"/>
</dbReference>
<dbReference type="SMART" id="SM00053">
    <property type="entry name" value="DYNc"/>
    <property type="match status" value="1"/>
</dbReference>
<dbReference type="SMART" id="SM00302">
    <property type="entry name" value="GED"/>
    <property type="match status" value="1"/>
</dbReference>
<dbReference type="SMART" id="SM00233">
    <property type="entry name" value="PH"/>
    <property type="match status" value="1"/>
</dbReference>
<dbReference type="SUPFAM" id="SSF52540">
    <property type="entry name" value="P-loop containing nucleoside triphosphate hydrolases"/>
    <property type="match status" value="1"/>
</dbReference>
<dbReference type="SUPFAM" id="SSF50729">
    <property type="entry name" value="PH domain-like"/>
    <property type="match status" value="1"/>
</dbReference>
<dbReference type="PROSITE" id="PS00410">
    <property type="entry name" value="G_DYNAMIN_1"/>
    <property type="match status" value="1"/>
</dbReference>
<dbReference type="PROSITE" id="PS51718">
    <property type="entry name" value="G_DYNAMIN_2"/>
    <property type="match status" value="1"/>
</dbReference>
<dbReference type="PROSITE" id="PS51388">
    <property type="entry name" value="GED"/>
    <property type="match status" value="1"/>
</dbReference>
<dbReference type="PROSITE" id="PS50003">
    <property type="entry name" value="PH_DOMAIN"/>
    <property type="match status" value="1"/>
</dbReference>
<name>DYN1_RAT</name>
<proteinExistence type="evidence at protein level"/>
<protein>
    <recommendedName>
        <fullName evidence="17 19">Dynamin-1</fullName>
        <ecNumber evidence="11">3.6.5.5</ecNumber>
    </recommendedName>
    <alternativeName>
        <fullName>B-dynamin</fullName>
    </alternativeName>
    <alternativeName>
        <fullName>D100</fullName>
    </alternativeName>
    <alternativeName>
        <fullName evidence="18">Dynamin I</fullName>
    </alternativeName>
    <alternativeName>
        <fullName evidence="23">Dynamin, brain</fullName>
    </alternativeName>
</protein>
<reference key="1">
    <citation type="journal article" date="1990" name="Nature">
        <title>Molecular cloning of the microtubule-associated mechanochemical enzyme dynamin reveals homology with a new family of GTP-binding proteins.</title>
        <authorList>
            <person name="Obar R.A."/>
            <person name="Collins C.A."/>
            <person name="Hammarback J.A."/>
            <person name="Shpetner H.S."/>
            <person name="Vallee R.B."/>
        </authorList>
    </citation>
    <scope>NUCLEOTIDE SEQUENCE [MRNA] (ISOFORM 2)</scope>
    <source>
        <strain>Sprague-Dawley</strain>
        <tissue>Brain</tissue>
    </source>
</reference>
<reference key="2">
    <citation type="submission" date="2007-04" db="UniProtKB">
        <authorList>
            <person name="Lubec G."/>
            <person name="Afjehi-Sadat L."/>
            <person name="Diao W."/>
        </authorList>
    </citation>
    <scope>PROTEIN SEQUENCE OF 5-15; 45-54; 67-87; 91-107; 116-157; 167-188; 257-266; 300-315; 328-342; 400-415; 511-522 AND 584-594 (ISOFORM 1/2/3/4)</scope>
    <scope>IDENTIFICATION BY MASS SPECTROMETRY</scope>
    <source>
        <strain>Sprague-Dawley</strain>
        <tissue>Hippocampus</tissue>
        <tissue>Spinal cord</tissue>
    </source>
</reference>
<reference key="3">
    <citation type="journal article" date="2007" name="J. Biol. Chem.">
        <title>The in vivo phosphorylation sites of rat brain dynamin I.</title>
        <authorList>
            <person name="Graham M.E."/>
            <person name="Anggono V."/>
            <person name="Bache N."/>
            <person name="Larsen M.R."/>
            <person name="Craft G.E."/>
            <person name="Robinson P.J."/>
        </authorList>
    </citation>
    <scope>PROTEIN SEQUENCE OF 343-364; 511-522 AND 797-838 (ISOFORM 1/2/4/5/6/8)</scope>
    <scope>PROTEIN SEQUENCE OF 847-864 (ISOFORM 1/5)</scope>
    <scope>PHOSPHORYLATION AT SER-347; SER-512; SER-774; SER-778; SER-822; SER-851 AND SER-857</scope>
    <scope>IDENTIFICATION BY MASS SPECTROMETRY</scope>
    <scope>MUTAGENESIS OF SER-774; SER-778 AND THR-780</scope>
    <scope>INTERACTION WITH AMPH</scope>
</reference>
<reference key="4">
    <citation type="journal article" date="2004" name="Genome Res.">
        <title>The status, quality, and expansion of the NIH full-length cDNA project: the Mammalian Gene Collection (MGC).</title>
        <authorList>
            <consortium name="The MGC Project Team"/>
        </authorList>
    </citation>
    <scope>NUCLEOTIDE SEQUENCE [LARGE SCALE MRNA] OF 368-581 (ISOFORM 5/6/7/8)</scope>
    <source>
        <tissue>Brain</tissue>
    </source>
</reference>
<reference key="5">
    <citation type="submission" date="2003-04" db="EMBL/GenBank/DDBJ databases">
        <title>Amgen rat EST program.</title>
        <authorList>
            <consortium name="Amgen EST program"/>
        </authorList>
    </citation>
    <scope>NUCLEOTIDE SEQUENCE [LARGE SCALE MRNA] OF 668-864 (ISOFORM 1/5)</scope>
    <source>
        <tissue>Brain</tissue>
        <tissue>Hypothalamus</tissue>
    </source>
</reference>
<reference key="6">
    <citation type="journal article" date="1997" name="J. Biol. Chem.">
        <title>Synaptojanin forms two separate complexes in the nerve terminal. Interactions with endophilin and amphiphysin.</title>
        <authorList>
            <person name="Micheva K.D."/>
            <person name="Kay B.K."/>
            <person name="McPherson P.S."/>
        </authorList>
    </citation>
    <scope>INTERACTION WITH AMPH; BIN1; SH3GL2 AND SYNJ1</scope>
</reference>
<reference key="7">
    <citation type="journal article" date="2003" name="J. Biol. Chem.">
        <title>Syntaphilin binds to dynamin-1 and inhibits dynamin-dependent endocytosis.</title>
        <authorList>
            <person name="Das S."/>
            <person name="Gerwin C."/>
            <person name="Sheng Z.H."/>
        </authorList>
    </citation>
    <scope>INTERACTION WITH SNPH</scope>
</reference>
<reference key="8">
    <citation type="journal article" date="2004" name="J. Cell Sci.">
        <title>Phospholipase C-gamma1 is a guanine nucleotide exchange factor for dynamin-1 and enhances dynamin-1-dependent epidermal growth factor receptor endocytosis.</title>
        <authorList>
            <person name="Choi J.H."/>
            <person name="Park J.B."/>
            <person name="Bae S.S."/>
            <person name="Yun S."/>
            <person name="Kim H.S."/>
            <person name="Hong W.P."/>
            <person name="Kim I.S."/>
            <person name="Kim J.H."/>
            <person name="Han M.Y."/>
            <person name="Ryu S.H."/>
            <person name="Patterson R.L."/>
            <person name="Snyder S.H."/>
            <person name="Suh P.G."/>
        </authorList>
    </citation>
    <scope>INTERACTION WITH PLCG1</scope>
</reference>
<reference key="9">
    <citation type="journal article" date="2007" name="FEBS Lett.">
        <title>Myosin 1E interacts with synaptojanin-1 and dynamin and is involved in endocytosis.</title>
        <authorList>
            <person name="Krendel M."/>
            <person name="Osterweil E.K."/>
            <person name="Mooseker M.S."/>
        </authorList>
    </citation>
    <scope>SUBCELLULAR LOCATION</scope>
    <scope>INTERACTION WITH MYO1E</scope>
</reference>
<reference key="10">
    <citation type="journal article" date="1997" name="Proc. Natl. Acad. Sci. U.S.A.">
        <title>The SH3p4/Sh3p8/SH3p13 protein family: binding partners for synaptojanin and dynamin via a Grb2-like Src homology 3 domain.</title>
        <authorList>
            <person name="Ringstad N."/>
            <person name="Nemoto Y."/>
            <person name="De Camilli P."/>
        </authorList>
    </citation>
    <scope>SUBCELLULAR LOCATION</scope>
    <scope>INTERACTION WITH SH3GL1; SH3GL2 AND SH3GL3</scope>
    <source>
        <tissue>Brain</tissue>
    </source>
</reference>
<reference key="11">
    <citation type="journal article" date="1998" name="Mol. Biol. Cell">
        <title>Differential distribution of dynamin isoforms in mammalian cells.</title>
        <authorList>
            <person name="Cao H."/>
            <person name="Garcia F."/>
            <person name="McNiven M.A."/>
        </authorList>
    </citation>
    <scope>ALTERNATIVE SPLICING</scope>
    <scope>SUBCELLULAR LOCATION</scope>
    <scope>TISSUE SPECIFICITY</scope>
</reference>
<reference key="12">
    <citation type="journal article" date="2002" name="J. Biol. Chem.">
        <title>Interactions of phocein with nucleoside-diphosphate kinase, Eps15, and Dynamin I.</title>
        <authorList>
            <person name="Baillat G."/>
            <person name="Gaillard S."/>
            <person name="Castets F."/>
            <person name="Monneron A."/>
        </authorList>
    </citation>
    <scope>INTERACTION WITH MOB4</scope>
</reference>
<reference key="13">
    <citation type="journal article" date="2003" name="Nat. Cell Biol.">
        <title>Cdk5 is essential for synaptic vesicle endocytosis.</title>
        <authorList>
            <person name="Tan T.C."/>
            <person name="Valova V.A."/>
            <person name="Malladi C.S."/>
            <person name="Graham M.E."/>
            <person name="Berven L.A."/>
            <person name="Jupp O.J."/>
            <person name="Hansra G."/>
            <person name="McClure S.J."/>
            <person name="Sarcevic B."/>
            <person name="Boadle R.A."/>
            <person name="Larsen M.R."/>
            <person name="Cousin M.A."/>
            <person name="Robinson P.J."/>
        </authorList>
    </citation>
    <scope>PHOSPHORYLATION AT SER-774 AND SER-778 BY CDK5</scope>
    <scope>IDENTIFICATION BY MASS SPECTROMETRY</scope>
</reference>
<reference key="14">
    <citation type="journal article" date="2012" name="Nat. Commun.">
        <title>Quantitative maps of protein phosphorylation sites across 14 different rat organs and tissues.</title>
        <authorList>
            <person name="Lundby A."/>
            <person name="Secher A."/>
            <person name="Lage K."/>
            <person name="Nordsborg N.B."/>
            <person name="Dmytriyev A."/>
            <person name="Lundby C."/>
            <person name="Olsen J.V."/>
        </authorList>
    </citation>
    <scope>PHOSPHORYLATION [LARGE SCALE ANALYSIS] AT SER-347; SER-851 AND SER-857</scope>
    <scope>IDENTIFICATION BY MASS SPECTROMETRY [LARGE SCALE ANALYSIS]</scope>
</reference>
<reference key="15">
    <citation type="journal article" date="2015" name="J. Cell Sci.">
        <title>The juxtamembrane region of synaptotagmin 1 interacts with dynamin 1 and regulates vesicle fission during compensatory endocytosis in endocrine cells.</title>
        <authorList>
            <person name="McAdam R.L."/>
            <person name="Varga K.T."/>
            <person name="Jiang Z."/>
            <person name="Young F.B."/>
            <person name="Blandford V."/>
            <person name="McPherson P.S."/>
            <person name="Gong L.W."/>
            <person name="Sossin W.S."/>
        </authorList>
    </citation>
    <scope>INTERACTION WITH SYT1</scope>
</reference>
<reference evidence="24" key="16">
    <citation type="journal article" date="2005" name="Proc. Natl. Acad. Sci. U.S.A.">
        <title>Crystal structure of the GTPase domain of rat dynamin 1.</title>
        <authorList>
            <person name="Reubold T.F."/>
            <person name="Eschenburg S."/>
            <person name="Becker A."/>
            <person name="Leonard M."/>
            <person name="Schmid S.L."/>
            <person name="Vallee R.B."/>
            <person name="Kull F.J."/>
            <person name="Manstein D.J."/>
        </authorList>
    </citation>
    <scope>X-RAY CRYSTALLOGRAPHY (1.9 ANGSTROMS) OF 6-304</scope>
    <scope>FUNCTION</scope>
    <scope>CATALYTIC ACTIVITY</scope>
    <scope>BIOPHYSICOCHEMICAL PROPERTIES</scope>
    <scope>MUTAGENESIS OF ARG-59</scope>
</reference>
<reference evidence="25" key="17">
    <citation type="journal article" date="2011" name="Nature">
        <title>The crystal structure of dynamin.</title>
        <authorList>
            <person name="Ford M.G."/>
            <person name="Jenni S."/>
            <person name="Nunnari J."/>
        </authorList>
    </citation>
    <scope>X-RAY CRYSTALLOGRAPHY (3.10 ANGSTROMS) OF 1-752</scope>
</reference>
<accession>P21575</accession>
<organism>
    <name type="scientific">Rattus norvegicus</name>
    <name type="common">Rat</name>
    <dbReference type="NCBI Taxonomy" id="10116"/>
    <lineage>
        <taxon>Eukaryota</taxon>
        <taxon>Metazoa</taxon>
        <taxon>Chordata</taxon>
        <taxon>Craniata</taxon>
        <taxon>Vertebrata</taxon>
        <taxon>Euteleostomi</taxon>
        <taxon>Mammalia</taxon>
        <taxon>Eutheria</taxon>
        <taxon>Euarchontoglires</taxon>
        <taxon>Glires</taxon>
        <taxon>Rodentia</taxon>
        <taxon>Myomorpha</taxon>
        <taxon>Muroidea</taxon>
        <taxon>Muridae</taxon>
        <taxon>Murinae</taxon>
        <taxon>Rattus</taxon>
    </lineage>
</organism>
<sequence>MGNRGMEDLIPLVNRLQDAFSAIGQNADLDLPQIAVVGGQSAGKSSVLENFVGRDFLPRGSGIVTRRPLVLQLVNSTTEYAEFLHCKGKKFTDFEEVRLEIEAETDRVTGTNKGISPVPINLRVYSPHVLNLTLVDLPGMTKVPVGDQPPDIEFQIRDMLMQFVTKENCLILAVSPANSDLANSDALKIAKEVDPQGQRTIGVITKLDLMDEGTDARDVLENKLLPLRRGYIGVVNRSQKDIDGKKDITAALAAERKFFLSHPSYRHLADRMGTPYLQKVLNQQLTNHIRDTLPGLRNKLQSQLLSIEKEVDEYKNFRPDDPARKTKALLQMVQQFAVDFEKRIEGSGDQIDTYELSGGARINRIFHERFPFELVKMEFDEKELRREISYAIKNIHGIRTGLFTPDLAFEATVKKQVQKLKEPSIKCVDMVVSELTSTIRKCSEKLQQYPRLREEMERIVTTHIREREGRTKEQVMLLIDIELAYMNTNHEDFIGFANAQQRSNQMNKKKTSGNQDEILVIRKGWLTINNIGIMKGGSKEYWFVLTAENLSWYKDDEEKEKKYMLSVDNLKLRDVEKGFMSSKHIFALFNTEQRNVYKDYRQLELACETQEEVDSWKASFLRAGVYPERVGDKEKASETEENGSDSFMHSMDPQLERQVETIRNLVDSYMAIVNKTVRDLMPKTIMHLMINNTKEFIFSELLANLYSCGDQNTLMEESAEQAQRRDEMLRMYHALKEALSIIGDINTTTVSTPMPPPVDDSWLQVQSVPAGRRSPTSSPTPQRRAPAVPPARPGSRGPAPGPPPAGSALGGAPPVPSRPGASPDPFGPPPQVPSRPNRAPPGVPSRSGQASPSRPESPRPPFDL</sequence>
<comment type="function">
    <text evidence="1 2 3">Catalyzes the hydrolysis of GTP and utilizes this energy to mediate vesicle scission and participates in many forms of endocytosis, such as clathrin-mediated endocytosis or synaptic vesicle endocytosis as well as rapid endocytosis (RE). Associates to the membrane, through lipid binding, and self-assembles into rings and stacks of interconnected rings through oligomerization to form a helical polymer around the vesicle membrane leading to constriction of invaginated coated pits around their necks. Self-assembly of the helical polymer induces membrane tubules narrowing until the polymer reaches a length sufficient to trigger GTP hydrolysis. Depending on the curvature imposed on the tubules, membrane detachment from the helical polymer upon GTP hydrolysis can cause spontaneous hemifission followed by complete fission. May play a role in regulating early stages of clathrin-mediated endocytosis in non-neuronal cells through its activation by dephosphorylation via the signaling downstream of EGFR (By similarity). Controls vesicle size at a step before fission, during formation of membrane pits, at hippocampal synapses. Controls plastic adaptation of the synaptic vesicle recycling machinery to high levels of activity (By similarity). Mediates rapid endocytosis (RE), a Ca(2+)-dependent and clathrin- and K(+)-independent process in chromaffin cells. Microtubule-associated force-producing protein involved in producing microtubule bundles and able to bind and hydrolyze GTP (By similarity). Through its interaction with DNAJC6, acts during the early steps of clathrin-coated vesicle (CCV) formation (By similarity).</text>
</comment>
<comment type="catalytic activity">
    <reaction evidence="11">
        <text>GTP + H2O = GDP + phosphate + H(+)</text>
        <dbReference type="Rhea" id="RHEA:19669"/>
        <dbReference type="ChEBI" id="CHEBI:15377"/>
        <dbReference type="ChEBI" id="CHEBI:15378"/>
        <dbReference type="ChEBI" id="CHEBI:37565"/>
        <dbReference type="ChEBI" id="CHEBI:43474"/>
        <dbReference type="ChEBI" id="CHEBI:58189"/>
        <dbReference type="EC" id="3.6.5.5"/>
    </reaction>
    <physiologicalReaction direction="left-to-right" evidence="11">
        <dbReference type="Rhea" id="RHEA:19670"/>
    </physiologicalReaction>
</comment>
<comment type="biophysicochemical properties">
    <kinetics>
        <KM evidence="11">46 uM for GTP (for basal GTPase activity)</KM>
        <KM evidence="11">30 uM for GTP (for assembly-stimulated GTPase activity)</KM>
    </kinetics>
</comment>
<comment type="subunit">
    <text evidence="1 2 9 10 12 13 15">Homodimer; homodimerization is mediated by the dynamin-type G domain which promotes assembly-stimulated GTPase activity. Homo-tetramer formed from two dimers in the absence of lipid. Oligomerizes into a helical polymer that self-assembles around the vesicle membrane, when associated to the menbrane through lipid binding. Interacts (via C-terminal proline-rich domain (PRD)) with SNX9 (via SH3 domain); this interaction allows regulation of DNM1 self-assembly during late stages of endocytic vesicle formation and supports DNM1's early functions in accelerating clathrin-coated pits (CCPs) maturation in non neuronals cell. Interacts (via C-terminal proline-rich domain (PRD)) with MYO1E (via SH3 domain); this interaction regulates receptor-mediated endocytosis. Interacts with SNX33 (via SH3 domain); this interaction decreases DNM1-dependent endocytosis. Interacts with DIAPH1. Interacts with GRB2 (via SH3 domain); this interaction mediates disassembly of DNM1 polymers, therefore modulates self-assembly (By similarity). Forms a complex with BIN1 (via SH3 domain) and SH3GL2 (via SH3 domain) (PubMed:9341169). Forms a complex with SH3GL2 (via SH3 domain) and AMPH (via SH3 domain) (PubMed:9341169). Forms a complex with SH3GL2 (via SH3 domain) and SYNJ1 (PubMed:9341169). Interacts with AMPH (PubMed:17376771). Interacts (via C-terminal proline-rich domain (PRD)) with SYT1; this interaction facilitates vesicle fission during clathrin-mediated endocytosis (CME) (PubMed:25964652). Interacts (via C-terminal proline-rich domain (PRD)) with PLCG1 (via SH3 domain); this interaction stimulates the release of GDP from DNM1 and enhances DNM1-dependent endocytosis (PubMed:15252117). Interacts with SNPH; this interaction inhibits the binding of DNM1 to AMPH and DNM1-receptor-mediated endocytosis (PubMed:12896979). Interacts with CAV1. Interacts with SH3GLB1 (via SH3 domain). Interacts with PACSIN1 (via SH3 domain), PACSIN2 (via SH3 domain) and PACSIN3 (via SH3 domain). Interacts with UNC119; this interaction decreases DNM1's GTPase activity and affects DNM1's interaction with AMPH (By similarity). Interacts (GTP-bound form) with DNAJC6; this interaction allows clathrin-coated vesicle (CCV) formation at the plasma membrane (By similarity).</text>
</comment>
<comment type="interaction">
    <interactant intactId="EBI-80070">
        <id>P21575</id>
    </interactant>
    <interactant intactId="EBI-80080">
        <id>O08838</id>
        <label>Amph</label>
    </interactant>
    <organismsDiffer>false</organismsDiffer>
    <experiments>3</experiments>
</comment>
<comment type="interaction">
    <interactant intactId="EBI-80070">
        <id>P21575</id>
    </interactant>
    <interactant intactId="EBI-80095">
        <id>O08839</id>
        <label>Bin1</label>
    </interactant>
    <organismsDiffer>false</organismsDiffer>
    <experiments>2</experiments>
</comment>
<comment type="interaction">
    <interactant intactId="EBI-80070">
        <id>P21575</id>
    </interactant>
    <interactant intactId="EBI-80070">
        <id>P21575</id>
        <label>Dnm1</label>
    </interactant>
    <organismsDiffer>false</organismsDiffer>
    <experiments>7</experiments>
</comment>
<comment type="interaction">
    <interactant intactId="EBI-80070">
        <id>P21575</id>
    </interactant>
    <interactant intactId="EBI-401775">
        <id>P62994</id>
        <label>Grb2</label>
    </interactant>
    <organismsDiffer>false</organismsDiffer>
    <experiments>3</experiments>
</comment>
<comment type="interaction">
    <interactant intactId="EBI-80070">
        <id>P21575</id>
    </interactant>
    <interactant intactId="EBI-1550185">
        <id>Q9Z0W5</id>
        <label>Pacsin1</label>
    </interactant>
    <organismsDiffer>false</organismsDiffer>
    <experiments>4</experiments>
</comment>
<comment type="interaction">
    <interactant intactId="EBI-80070">
        <id>P21575</id>
    </interactant>
    <interactant intactId="EBI-518443">
        <id>Q63787</id>
        <label>Pik3r1</label>
    </interactant>
    <organismsDiffer>false</organismsDiffer>
    <experiments>2</experiments>
</comment>
<comment type="interaction">
    <interactant intactId="EBI-80070">
        <id>P21575</id>
    </interactant>
    <interactant intactId="EBI-1149197">
        <id>O35179</id>
        <label>Sh3gl2</label>
    </interactant>
    <organismsDiffer>false</organismsDiffer>
    <experiments>6</experiments>
</comment>
<comment type="interaction">
    <interactant intactId="EBI-80070">
        <id>P21575</id>
    </interactant>
    <interactant intactId="EBI-1149266">
        <id>O35180</id>
        <label>Sh3gl3</label>
    </interactant>
    <organismsDiffer>false</organismsDiffer>
    <experiments>2</experiments>
</comment>
<comment type="interaction">
    <interactant intactId="EBI-80070">
        <id>P21575</id>
    </interactant>
    <interactant intactId="EBI-80909">
        <id>Q9WV48</id>
        <label>Shank1</label>
    </interactant>
    <organismsDiffer>false</organismsDiffer>
    <experiments>2</experiments>
</comment>
<comment type="interaction">
    <interactant intactId="EBI-80070">
        <id>P21575</id>
    </interactant>
    <interactant intactId="EBI-6986245">
        <id>Q6IN36</id>
        <label>Wipf1</label>
    </interactant>
    <organismsDiffer>false</organismsDiffer>
    <experiments>2</experiments>
</comment>
<comment type="interaction">
    <interactant intactId="EBI-80070">
        <id>P21575</id>
    </interactant>
    <interactant intactId="EBI-2483419">
        <id>Q6XZF7</id>
        <label>DNMBP</label>
    </interactant>
    <organismsDiffer>true</organismsDiffer>
    <experiments>3</experiments>
</comment>
<comment type="interaction">
    <interactant intactId="EBI-80070">
        <id>P21575</id>
    </interactant>
    <interactant intactId="EBI-4279548">
        <id>Q12965</id>
        <label>MYO1E</label>
    </interactant>
    <organismsDiffer>true</organismsDiffer>
    <experiments>2</experiments>
</comment>
<comment type="interaction">
    <interactant intactId="EBI-80070">
        <id>P21575</id>
    </interactant>
    <interactant intactId="EBI-7014859">
        <id>Q5TCZ1-2</id>
    </interactant>
    <organismsDiffer>true</organismsDiffer>
    <experiments>2</experiments>
</comment>
<comment type="subcellular location">
    <molecule>Isoform 2</molecule>
    <subcellularLocation>
        <location evidence="16">Cytoplasmic vesicle</location>
        <location evidence="16">Clathrin-coated vesicle</location>
    </subcellularLocation>
    <text evidence="16">Strongly associated with clathrin-coated vesicles at the plasma membrane.</text>
</comment>
<comment type="subcellular location">
    <molecule>Isoform 6</molecule>
    <subcellularLocation>
        <location evidence="16">Golgi apparatus</location>
    </subcellularLocation>
    <text evidence="16">Diffuse cytoplasmic distribution.</text>
</comment>
<comment type="subcellular location">
    <subcellularLocation>
        <location evidence="2">Cell membrane</location>
    </subcellularLocation>
    <subcellularLocation>
        <location evidence="2">Membrane</location>
        <location evidence="2">Clathrin-coated pit</location>
    </subcellularLocation>
    <subcellularLocation>
        <location evidence="22">Cytoplasmic vesicle</location>
    </subcellularLocation>
    <subcellularLocation>
        <location evidence="14">Presynapse</location>
    </subcellularLocation>
    <subcellularLocation>
        <location evidence="3">Cytoplasmic vesicle</location>
        <location evidence="3">Secretory vesicle</location>
        <location evidence="3">Chromaffin granule</location>
    </subcellularLocation>
    <text evidence="2">Associated to the membrane in a helical polymer shape in a GTP bound state. Transiently recruited to endocytic clathrin-coated pits (CCPs) at a late stage of clathrin-coated vesicle (CCV) formation.</text>
</comment>
<comment type="alternative products">
    <event type="alternative splicing"/>
    <isoform>
        <id>P21575-1</id>
        <name>1</name>
        <name evidence="20">aa</name>
        <sequence type="displayed"/>
    </isoform>
    <isoform>
        <id>P21575-2</id>
        <name>2</name>
        <name evidence="20">ab</name>
        <sequence type="described" ref="VSP_034037"/>
    </isoform>
    <isoform>
        <id>P21575-3</id>
        <name>3</name>
        <name evidence="20">ac</name>
        <sequence type="described" ref="VSP_034034 VSP_034035"/>
    </isoform>
    <isoform>
        <id>P21575-4</id>
        <name>4</name>
        <name evidence="20">ad</name>
        <sequence type="described" ref="VSP_034036"/>
    </isoform>
    <isoform>
        <id>P21575-5</id>
        <name>5</name>
        <name evidence="20">ba</name>
        <sequence type="described" ref="VSP_034033"/>
    </isoform>
    <isoform>
        <id>P21575-6</id>
        <name>6</name>
        <name evidence="20">bb</name>
        <sequence type="described" ref="VSP_034033 VSP_034037"/>
    </isoform>
    <isoform>
        <id>P21575-7</id>
        <name>7</name>
        <name evidence="20">bc</name>
        <sequence type="described" ref="VSP_034033 VSP_034034 VSP_034035"/>
    </isoform>
    <isoform>
        <id>P21575-8</id>
        <name>8</name>
        <name evidence="20">bd</name>
        <sequence type="described" ref="VSP_034033 VSP_034036"/>
    </isoform>
</comment>
<comment type="tissue specificity">
    <text evidence="16">Brain-specific (peripheral sensory neurons).</text>
</comment>
<comment type="developmental stage">
    <text>Expressed in neurons after maturation.</text>
</comment>
<comment type="domain">
    <text evidence="2">The dynamin-type G mediates homodimerization and plays a role in self-assembly.</text>
</comment>
<comment type="domain">
    <text evidence="2 15">The C-terminal proline-rich domain (PRD) mediates interaction with SH3-binding partners (PubMed:9341169). Is required for DNM1 self-assembly (By similarity).</text>
</comment>
<comment type="domain">
    <text evidence="2">The PH domain binds phosphoinositides such as 1-phosphatidyl-1D-myo-inositol 4,5-bisphosphate, 1-phosphatidyl-1D-myo-inositol 3,4-bisphosphate and 1-phosphatidyl-1D-myo-inositol 3,4,5-trisphosphate, and mediates receptor-mediated endocytosis.</text>
</comment>
<comment type="PTM">
    <text evidence="2 8">Phosphorylation at Ser-774 by GSK3B/GSK3-beta leads to inactivation of receptor-mediated endocytosis in non-neuronal cells. Dephosphorylation at Ser-774, through the EGFR downstream signaling, leads to activation and regulates early stages of clathrin-mediated endocytosis (CME) (By similarity). Phosphorylated by CDK5 leading to synaptic vesicle endocytosis (SVE) activation (PubMed:12855954).</text>
</comment>
<comment type="similarity">
    <text evidence="6">Belongs to the TRAFAC class dynamin-like GTPase superfamily. Dynamin/Fzo/YdjA family.</text>
</comment>
<comment type="caution">
    <text evidence="21">Absence of tyrosine and threonine phosphorylation is demonstrated in PubMed:17376771. However, tyrosine and threonine phosphorylation may still occur in different experimental conditions.</text>
</comment>
<keyword id="KW-0002">3D-structure</keyword>
<keyword id="KW-0025">Alternative splicing</keyword>
<keyword id="KW-1003">Cell membrane</keyword>
<keyword id="KW-0966">Cell projection</keyword>
<keyword id="KW-0168">Coated pit</keyword>
<keyword id="KW-0968">Cytoplasmic vesicle</keyword>
<keyword id="KW-0903">Direct protein sequencing</keyword>
<keyword id="KW-0254">Endocytosis</keyword>
<keyword id="KW-0333">Golgi apparatus</keyword>
<keyword id="KW-0342">GTP-binding</keyword>
<keyword id="KW-0378">Hydrolase</keyword>
<keyword id="KW-0472">Membrane</keyword>
<keyword id="KW-0488">Methylation</keyword>
<keyword id="KW-0493">Microtubule</keyword>
<keyword id="KW-0505">Motor protein</keyword>
<keyword id="KW-0944">Nitration</keyword>
<keyword id="KW-0547">Nucleotide-binding</keyword>
<keyword id="KW-0597">Phosphoprotein</keyword>
<keyword id="KW-1185">Reference proteome</keyword>
<keyword id="KW-0770">Synapse</keyword>
<gene>
    <name type="primary">Dnm1</name>
    <name type="synonym">Dnm</name>
</gene>
<evidence type="ECO:0000250" key="1">
    <source>
        <dbReference type="UniProtKB" id="P39053"/>
    </source>
</evidence>
<evidence type="ECO:0000250" key="2">
    <source>
        <dbReference type="UniProtKB" id="Q05193"/>
    </source>
</evidence>
<evidence type="ECO:0000250" key="3">
    <source>
        <dbReference type="UniProtKB" id="Q08DF4"/>
    </source>
</evidence>
<evidence type="ECO:0000255" key="4">
    <source>
        <dbReference type="PROSITE-ProRule" id="PRU00145"/>
    </source>
</evidence>
<evidence type="ECO:0000255" key="5">
    <source>
        <dbReference type="PROSITE-ProRule" id="PRU00720"/>
    </source>
</evidence>
<evidence type="ECO:0000255" key="6">
    <source>
        <dbReference type="PROSITE-ProRule" id="PRU01055"/>
    </source>
</evidence>
<evidence type="ECO:0000256" key="7">
    <source>
        <dbReference type="SAM" id="MobiDB-lite"/>
    </source>
</evidence>
<evidence type="ECO:0000269" key="8">
    <source>
    </source>
</evidence>
<evidence type="ECO:0000269" key="9">
    <source>
    </source>
</evidence>
<evidence type="ECO:0000269" key="10">
    <source>
    </source>
</evidence>
<evidence type="ECO:0000269" key="11">
    <source>
    </source>
</evidence>
<evidence type="ECO:0000269" key="12">
    <source>
    </source>
</evidence>
<evidence type="ECO:0000269" key="13">
    <source>
    </source>
</evidence>
<evidence type="ECO:0000269" key="14">
    <source>
    </source>
</evidence>
<evidence type="ECO:0000269" key="15">
    <source>
    </source>
</evidence>
<evidence type="ECO:0000269" key="16">
    <source>
    </source>
</evidence>
<evidence type="ECO:0000303" key="17">
    <source>
    </source>
</evidence>
<evidence type="ECO:0000303" key="18">
    <source>
    </source>
</evidence>
<evidence type="ECO:0000303" key="19">
    <source>
    </source>
</evidence>
<evidence type="ECO:0000303" key="20">
    <source>
    </source>
</evidence>
<evidence type="ECO:0000305" key="21"/>
<evidence type="ECO:0000305" key="22">
    <source>
    </source>
</evidence>
<evidence type="ECO:0000305" key="23">
    <source>
    </source>
</evidence>
<evidence type="ECO:0007744" key="24">
    <source>
        <dbReference type="PDB" id="2AKA"/>
    </source>
</evidence>
<evidence type="ECO:0007744" key="25">
    <source>
        <dbReference type="PDB" id="3ZVR"/>
    </source>
</evidence>
<evidence type="ECO:0007744" key="26">
    <source>
    </source>
</evidence>
<evidence type="ECO:0007829" key="27">
    <source>
        <dbReference type="PDB" id="2AKA"/>
    </source>
</evidence>
<evidence type="ECO:0007829" key="28">
    <source>
        <dbReference type="PDB" id="3ZVR"/>
    </source>
</evidence>